<accession>A0A1L7TY28</accession>
<reference key="1">
    <citation type="journal article" date="2016" name="Genome Biol. Evol.">
        <title>Comparative 'omics' of the Fusarium fujikuroi species complex highlights differences in genetic potential and metabolite synthesis.</title>
        <authorList>
            <person name="Niehaus E.-M."/>
            <person name="Muensterkoetter M."/>
            <person name="Proctor R.H."/>
            <person name="Brown D.W."/>
            <person name="Sharon A."/>
            <person name="Idan Y."/>
            <person name="Oren-Young L."/>
            <person name="Sieber C.M."/>
            <person name="Novak O."/>
            <person name="Pencik A."/>
            <person name="Tarkowska D."/>
            <person name="Hromadova K."/>
            <person name="Freeman S."/>
            <person name="Maymon M."/>
            <person name="Elazar M."/>
            <person name="Youssef S.A."/>
            <person name="El-Shabrawy E.S.M."/>
            <person name="Shalaby A.B.A."/>
            <person name="Houterman P."/>
            <person name="Brock N.L."/>
            <person name="Burkhardt I."/>
            <person name="Tsavkelova E.A."/>
            <person name="Dickschat J.S."/>
            <person name="Galuszka P."/>
            <person name="Gueldener U."/>
            <person name="Tudzynski B."/>
        </authorList>
    </citation>
    <scope>NUCLEOTIDE SEQUENCE [LARGE SCALE GENOMIC DNA]</scope>
    <source>
        <strain>MRC7560</strain>
    </source>
</reference>
<reference key="2">
    <citation type="journal article" date="2022" name="ChemBioChem">
        <title>Biosynthesis of the isocoumarin derivatives fusamarins is mediated by the PKS8 gene cluster in Fusarium.</title>
        <authorList>
            <person name="Atanasoff-Kardjalieff A.K."/>
            <person name="Seidl B."/>
            <person name="Steinert K."/>
            <person name="Daniliuc C.G."/>
            <person name="Schuhmacher R."/>
            <person name="Humpf H.U."/>
            <person name="Kalinina S."/>
            <person name="Studt-Reinhold L."/>
        </authorList>
    </citation>
    <scope>FUNCTION</scope>
    <scope>INDUCTION</scope>
    <scope>DISRUPTION PHENOTYPE</scope>
    <scope>PATHWAY</scope>
</reference>
<name>FMN2_FUSMA</name>
<keyword id="KW-0521">NADP</keyword>
<keyword id="KW-0547">Nucleotide-binding</keyword>
<keyword id="KW-0560">Oxidoreductase</keyword>
<sequence length="377" mass="39946">MKAMVSNASGGYCLNSAMPQPSPMPGMMLVRVEAVALNPYDTKVIEYGIITPEPYVGGCDFAGVVVAAGPGVTRFQPGDPVLSMHTRGGFAEYALAFEDMSCHIPKGMSYNEACSLGLGIGISGLALFQQPGLNLPLQHGQDLSDMTGNGRSNGYTNGHTNGHTNGHSKGEEEQKDPVIVLVAGGASASGTMATQLLKLAGYNPIVTCSPANNSLCESFGASACFDYNSTTCGADIRLHTDNSLAYVVDCVTNVATMTMCYEAIGTQGGTYIALDATANTVKYTRRDVRADWVMANTLLGEPCKLDGVYGRSSAPEHREFASHFFRLAERWLAEGKIRNHPLEIRTGGLESVDAGLQDLRDGVIRGKKLVVPLHVGA</sequence>
<comment type="function">
    <text evidence="4">Trans-enoyl reductase; part of the gene cluster that mediates the biosynthesis of fusamarins, isocoumarin derivatives that show moderate cytotoxicity with IC(50) values between 1 and 50 uM (PubMed:36137261). The polyketide synthase FMN1 probably synthesizes two different polyketides, a tetra- and a pentaketide, containinga varying number of double bonds depending on the selective actions of the trans-enoyl reductase FMN2 (PubMed:36137261). Chain fusion will presumably be mediated by the KS domain before finally offloading is catalyzed by the alpha/beta hydrolase fold enzyme FMN3 (PubMed:36137261).</text>
</comment>
<comment type="pathway">
    <text evidence="4">Secondary metabolite biosynthesis.</text>
</comment>
<comment type="induction">
    <text evidence="4">Expression is induced when NaNO(3) is used as sole nitrogen source (PubMed:36137261). Expression is positively regulated by the cluster-specific transcription factor FMN4 (PubMed:36137261).</text>
</comment>
<comment type="disruption phenotype">
    <text evidence="4">Impairs the production of fusamarins.</text>
</comment>
<comment type="similarity">
    <text evidence="6">Belongs to the zinc-containing alcohol dehydrogenase family.</text>
</comment>
<proteinExistence type="evidence at transcript level"/>
<gene>
    <name evidence="5" type="primary">FMN2</name>
    <name type="ORF">FMAN_15222</name>
</gene>
<evidence type="ECO:0000250" key="1">
    <source>
        <dbReference type="UniProtKB" id="Q9Y7D0"/>
    </source>
</evidence>
<evidence type="ECO:0000255" key="2"/>
<evidence type="ECO:0000256" key="3">
    <source>
        <dbReference type="SAM" id="MobiDB-lite"/>
    </source>
</evidence>
<evidence type="ECO:0000269" key="4">
    <source>
    </source>
</evidence>
<evidence type="ECO:0000303" key="5">
    <source>
    </source>
</evidence>
<evidence type="ECO:0000305" key="6"/>
<evidence type="ECO:0000305" key="7">
    <source>
    </source>
</evidence>
<dbReference type="EC" id="1.-.-.-" evidence="7"/>
<dbReference type="EMBL" id="FCQH01000014">
    <property type="protein sequence ID" value="CVL03384.1"/>
    <property type="molecule type" value="Genomic_DNA"/>
</dbReference>
<dbReference type="SMR" id="A0A1L7TY28"/>
<dbReference type="VEuPathDB" id="FungiDB:FMAN_15222"/>
<dbReference type="Proteomes" id="UP000184255">
    <property type="component" value="Unassembled WGS sequence"/>
</dbReference>
<dbReference type="GO" id="GO:0000166">
    <property type="term" value="F:nucleotide binding"/>
    <property type="evidence" value="ECO:0007669"/>
    <property type="project" value="UniProtKB-KW"/>
</dbReference>
<dbReference type="GO" id="GO:0016651">
    <property type="term" value="F:oxidoreductase activity, acting on NAD(P)H"/>
    <property type="evidence" value="ECO:0007669"/>
    <property type="project" value="InterPro"/>
</dbReference>
<dbReference type="CDD" id="cd08249">
    <property type="entry name" value="enoyl_reductase_like"/>
    <property type="match status" value="1"/>
</dbReference>
<dbReference type="Gene3D" id="3.90.180.10">
    <property type="entry name" value="Medium-chain alcohol dehydrogenases, catalytic domain"/>
    <property type="match status" value="1"/>
</dbReference>
<dbReference type="Gene3D" id="3.40.50.720">
    <property type="entry name" value="NAD(P)-binding Rossmann-like Domain"/>
    <property type="match status" value="1"/>
</dbReference>
<dbReference type="InterPro" id="IPR013149">
    <property type="entry name" value="ADH-like_C"/>
</dbReference>
<dbReference type="InterPro" id="IPR013154">
    <property type="entry name" value="ADH-like_N"/>
</dbReference>
<dbReference type="InterPro" id="IPR011032">
    <property type="entry name" value="GroES-like_sf"/>
</dbReference>
<dbReference type="InterPro" id="IPR036291">
    <property type="entry name" value="NAD(P)-bd_dom_sf"/>
</dbReference>
<dbReference type="InterPro" id="IPR020843">
    <property type="entry name" value="PKS_ER"/>
</dbReference>
<dbReference type="InterPro" id="IPR047122">
    <property type="entry name" value="Trans-enoyl_RdTase-like"/>
</dbReference>
<dbReference type="PANTHER" id="PTHR45348">
    <property type="entry name" value="HYPOTHETICAL OXIDOREDUCTASE (EUROFUNG)"/>
    <property type="match status" value="1"/>
</dbReference>
<dbReference type="PANTHER" id="PTHR45348:SF6">
    <property type="entry name" value="TRANS-ENOYL REDUCTASE APDC"/>
    <property type="match status" value="1"/>
</dbReference>
<dbReference type="Pfam" id="PF08240">
    <property type="entry name" value="ADH_N"/>
    <property type="match status" value="1"/>
</dbReference>
<dbReference type="Pfam" id="PF00107">
    <property type="entry name" value="ADH_zinc_N"/>
    <property type="match status" value="1"/>
</dbReference>
<dbReference type="SMART" id="SM00829">
    <property type="entry name" value="PKS_ER"/>
    <property type="match status" value="1"/>
</dbReference>
<dbReference type="SUPFAM" id="SSF50129">
    <property type="entry name" value="GroES-like"/>
    <property type="match status" value="1"/>
</dbReference>
<dbReference type="SUPFAM" id="SSF51735">
    <property type="entry name" value="NAD(P)-binding Rossmann-fold domains"/>
    <property type="match status" value="1"/>
</dbReference>
<feature type="chain" id="PRO_0000458172" description="Trans-enoyl reductase FMN2">
    <location>
        <begin position="1"/>
        <end position="377"/>
    </location>
</feature>
<feature type="domain" description="Enoyl reductase (ER)" evidence="2">
    <location>
        <begin position="7"/>
        <end position="370"/>
    </location>
</feature>
<feature type="region of interest" description="Disordered" evidence="3">
    <location>
        <begin position="143"/>
        <end position="173"/>
    </location>
</feature>
<feature type="compositionally biased region" description="Polar residues" evidence="3">
    <location>
        <begin position="144"/>
        <end position="155"/>
    </location>
</feature>
<feature type="compositionally biased region" description="Low complexity" evidence="3">
    <location>
        <begin position="156"/>
        <end position="167"/>
    </location>
</feature>
<feature type="binding site" evidence="1">
    <location>
        <begin position="186"/>
        <end position="189"/>
    </location>
    <ligand>
        <name>NADP(+)</name>
        <dbReference type="ChEBI" id="CHEBI:58349"/>
    </ligand>
</feature>
<feature type="binding site" evidence="1">
    <location>
        <begin position="209"/>
        <end position="212"/>
    </location>
    <ligand>
        <name>NADP(+)</name>
        <dbReference type="ChEBI" id="CHEBI:58349"/>
    </ligand>
</feature>
<feature type="binding site" evidence="1">
    <location>
        <position position="227"/>
    </location>
    <ligand>
        <name>NADP(+)</name>
        <dbReference type="ChEBI" id="CHEBI:58349"/>
    </ligand>
</feature>
<feature type="binding site" evidence="1">
    <location>
        <begin position="274"/>
        <end position="275"/>
    </location>
    <ligand>
        <name>NADP(+)</name>
        <dbReference type="ChEBI" id="CHEBI:58349"/>
    </ligand>
</feature>
<organism>
    <name type="scientific">Fusarium mangiferae</name>
    <name type="common">Mango malformation disease fungus</name>
    <dbReference type="NCBI Taxonomy" id="192010"/>
    <lineage>
        <taxon>Eukaryota</taxon>
        <taxon>Fungi</taxon>
        <taxon>Dikarya</taxon>
        <taxon>Ascomycota</taxon>
        <taxon>Pezizomycotina</taxon>
        <taxon>Sordariomycetes</taxon>
        <taxon>Hypocreomycetidae</taxon>
        <taxon>Hypocreales</taxon>
        <taxon>Nectriaceae</taxon>
        <taxon>Fusarium</taxon>
        <taxon>Fusarium fujikuroi species complex</taxon>
    </lineage>
</organism>
<protein>
    <recommendedName>
        <fullName evidence="5">Trans-enoyl reductase FMN2</fullName>
        <shortName evidence="5">Trans-ER</shortName>
        <ecNumber evidence="7">1.-.-.-</ecNumber>
    </recommendedName>
    <alternativeName>
        <fullName evidence="5">Fusamarins biosynthesis cluster protein 2</fullName>
    </alternativeName>
</protein>